<reference key="1">
    <citation type="journal article" date="2007" name="Proc. Natl. Acad. Sci. U.S.A.">
        <title>Genome sequencing and comparative analysis of Saccharomyces cerevisiae strain YJM789.</title>
        <authorList>
            <person name="Wei W."/>
            <person name="McCusker J.H."/>
            <person name="Hyman R.W."/>
            <person name="Jones T."/>
            <person name="Ning Y."/>
            <person name="Cao Z."/>
            <person name="Gu Z."/>
            <person name="Bruno D."/>
            <person name="Miranda M."/>
            <person name="Nguyen M."/>
            <person name="Wilhelmy J."/>
            <person name="Komp C."/>
            <person name="Tamse R."/>
            <person name="Wang X."/>
            <person name="Jia P."/>
            <person name="Luedi P."/>
            <person name="Oefner P.J."/>
            <person name="David L."/>
            <person name="Dietrich F.S."/>
            <person name="Li Y."/>
            <person name="Davis R.W."/>
            <person name="Steinmetz L.M."/>
        </authorList>
    </citation>
    <scope>NUCLEOTIDE SEQUENCE [LARGE SCALE GENOMIC DNA]</scope>
    <source>
        <strain>YJM789</strain>
    </source>
</reference>
<evidence type="ECO:0000255" key="1">
    <source>
        <dbReference type="HAMAP-Rule" id="MF_03137"/>
    </source>
</evidence>
<evidence type="ECO:0000305" key="2"/>
<sequence length="645" mass="73249">MLKFRIRPVRHIRCYKRHAYFLRYNHTTTPAQKLQAQIEQIPLENYRNFSIVAHVDHGKSTLSDRLLEITHVIDPNARNKQVLDKLEVERERGITIKAQTCSMFYKDKRTGKNYLLHLIDTPGHVDFRGEVSRSYASCGGAILLVDASQGIQAQTVANFYLAFSLGLKLIPVINKIDLNFTDVKQVKDQIVNNFELPEEDIIGVSAKTGLNVEELLLPAIIDRIPPPTGRPDKPFRALLVDSWYDAYLGAVLLVNIVDGFVRKNDKVICAQTKEKYEVKDIGIMYPDRTSTGTLKTGQVGYLVLGMKDSKEAKIGDTIMHLSKVNETEVLPGFEEQKPMVFVGAFPADGIEFKAMDDDMSRLVLNDRSVTLERETSNALGQGWRLGFLGSLHASVFRERLEKEYGSKLIITQPTVPYLVEFTDGKKKLITNPDEFPDGATKRVNVAAFHEPFIEAVMTLPQEYLGSVIRLCDSNRGEQIDITYLNTNGQVMLKYYLPLSHLVDDFFGKLKSVSRGFASLDYEDAGYRISDVVKLQLLVNGNAIDALSRVLHKSEVERVGREWVKKFKEYVKSQLYEVVIQARANNKIIARETIKARRKDVLQKLHASDVSRRKKLLAKQKEGKKHMKTVGNIQINQEAYQAFLRR</sequence>
<gene>
    <name evidence="1" type="primary">GUF1</name>
    <name type="ORF">SCY_3850</name>
</gene>
<comment type="function">
    <text evidence="1">Promotes mitochondrial protein synthesis. May act as a fidelity factor of the translation reaction, by catalyzing a one-codon backward translocation of tRNAs on improperly translocated ribosomes. Binds to mitochondrial ribosomes in a GTP-dependent manner.</text>
</comment>
<comment type="catalytic activity">
    <reaction evidence="1">
        <text>GTP + H2O = GDP + phosphate + H(+)</text>
        <dbReference type="Rhea" id="RHEA:19669"/>
        <dbReference type="ChEBI" id="CHEBI:15377"/>
        <dbReference type="ChEBI" id="CHEBI:15378"/>
        <dbReference type="ChEBI" id="CHEBI:37565"/>
        <dbReference type="ChEBI" id="CHEBI:43474"/>
        <dbReference type="ChEBI" id="CHEBI:58189"/>
    </reaction>
</comment>
<comment type="subcellular location">
    <subcellularLocation>
        <location evidence="1">Mitochondrion inner membrane</location>
        <topology evidence="1">Peripheral membrane protein</topology>
        <orientation evidence="1">Matrix side</orientation>
    </subcellularLocation>
</comment>
<comment type="miscellaneous">
    <text evidence="1">This protein may be expected to contain an N-terminal transit peptide but none has been predicted.</text>
</comment>
<comment type="similarity">
    <text evidence="2">Belongs to the TRAFAC class translation factor GTPase superfamily. Classic translation factor GTPase family. LepA subfamily.</text>
</comment>
<accession>A7A1H2</accession>
<proteinExistence type="inferred from homology"/>
<protein>
    <recommendedName>
        <fullName evidence="1">Translation factor GUF1, mitochondrial</fullName>
        <ecNumber>3.6.5.-</ecNumber>
    </recommendedName>
    <alternativeName>
        <fullName evidence="1">Elongation factor 4 homolog</fullName>
        <shortName evidence="1">EF-4</shortName>
    </alternativeName>
    <alternativeName>
        <fullName evidence="1">GTPase GUF1</fullName>
    </alternativeName>
    <alternativeName>
        <fullName evidence="1">Ribosomal back-translocase</fullName>
    </alternativeName>
</protein>
<name>GUF1_YEAS7</name>
<keyword id="KW-0342">GTP-binding</keyword>
<keyword id="KW-0378">Hydrolase</keyword>
<keyword id="KW-0472">Membrane</keyword>
<keyword id="KW-0496">Mitochondrion</keyword>
<keyword id="KW-0999">Mitochondrion inner membrane</keyword>
<keyword id="KW-0547">Nucleotide-binding</keyword>
<keyword id="KW-0648">Protein biosynthesis</keyword>
<dbReference type="EC" id="3.6.5.-"/>
<dbReference type="EMBL" id="AAFW02000170">
    <property type="protein sequence ID" value="EDN59376.1"/>
    <property type="molecule type" value="Genomic_DNA"/>
</dbReference>
<dbReference type="SMR" id="A7A1H2"/>
<dbReference type="HOGENOM" id="CLU_009995_3_1_1"/>
<dbReference type="Proteomes" id="UP000007060">
    <property type="component" value="Unassembled WGS sequence"/>
</dbReference>
<dbReference type="GO" id="GO:0005743">
    <property type="term" value="C:mitochondrial inner membrane"/>
    <property type="evidence" value="ECO:0007669"/>
    <property type="project" value="UniProtKB-SubCell"/>
</dbReference>
<dbReference type="GO" id="GO:0005759">
    <property type="term" value="C:mitochondrial matrix"/>
    <property type="evidence" value="ECO:0007669"/>
    <property type="project" value="UniProtKB-UniRule"/>
</dbReference>
<dbReference type="GO" id="GO:0005525">
    <property type="term" value="F:GTP binding"/>
    <property type="evidence" value="ECO:0007669"/>
    <property type="project" value="UniProtKB-UniRule"/>
</dbReference>
<dbReference type="GO" id="GO:0003924">
    <property type="term" value="F:GTPase activity"/>
    <property type="evidence" value="ECO:0007669"/>
    <property type="project" value="UniProtKB-UniRule"/>
</dbReference>
<dbReference type="GO" id="GO:0097177">
    <property type="term" value="F:mitochondrial ribosome binding"/>
    <property type="evidence" value="ECO:0007669"/>
    <property type="project" value="TreeGrafter"/>
</dbReference>
<dbReference type="GO" id="GO:0045727">
    <property type="term" value="P:positive regulation of translation"/>
    <property type="evidence" value="ECO:0007669"/>
    <property type="project" value="UniProtKB-UniRule"/>
</dbReference>
<dbReference type="GO" id="GO:0006412">
    <property type="term" value="P:translation"/>
    <property type="evidence" value="ECO:0007669"/>
    <property type="project" value="UniProtKB-KW"/>
</dbReference>
<dbReference type="CDD" id="cd03699">
    <property type="entry name" value="EF4_II"/>
    <property type="match status" value="1"/>
</dbReference>
<dbReference type="CDD" id="cd16260">
    <property type="entry name" value="EF4_III"/>
    <property type="match status" value="1"/>
</dbReference>
<dbReference type="CDD" id="cd01890">
    <property type="entry name" value="LepA"/>
    <property type="match status" value="1"/>
</dbReference>
<dbReference type="CDD" id="cd03709">
    <property type="entry name" value="lepA_C"/>
    <property type="match status" value="1"/>
</dbReference>
<dbReference type="FunFam" id="3.40.50.300:FF:000078">
    <property type="entry name" value="Elongation factor 4"/>
    <property type="match status" value="1"/>
</dbReference>
<dbReference type="FunFam" id="2.40.30.10:FF:000015">
    <property type="entry name" value="Translation factor GUF1, mitochondrial"/>
    <property type="match status" value="1"/>
</dbReference>
<dbReference type="FunFam" id="3.30.70.240:FF:000007">
    <property type="entry name" value="Translation factor GUF1, mitochondrial"/>
    <property type="match status" value="1"/>
</dbReference>
<dbReference type="FunFam" id="3.30.70.2570:FF:000001">
    <property type="entry name" value="Translation factor GUF1, mitochondrial"/>
    <property type="match status" value="1"/>
</dbReference>
<dbReference type="FunFam" id="3.30.70.870:FF:000004">
    <property type="entry name" value="Translation factor GUF1, mitochondrial"/>
    <property type="match status" value="1"/>
</dbReference>
<dbReference type="Gene3D" id="3.30.70.240">
    <property type="match status" value="1"/>
</dbReference>
<dbReference type="Gene3D" id="3.30.70.2570">
    <property type="entry name" value="Elongation factor 4, C-terminal domain"/>
    <property type="match status" value="1"/>
</dbReference>
<dbReference type="Gene3D" id="3.30.70.870">
    <property type="entry name" value="Elongation Factor G (Translational Gtpase), domain 3"/>
    <property type="match status" value="1"/>
</dbReference>
<dbReference type="Gene3D" id="3.40.50.300">
    <property type="entry name" value="P-loop containing nucleotide triphosphate hydrolases"/>
    <property type="match status" value="1"/>
</dbReference>
<dbReference type="Gene3D" id="2.40.30.10">
    <property type="entry name" value="Translation factors"/>
    <property type="match status" value="1"/>
</dbReference>
<dbReference type="HAMAP" id="MF_00071">
    <property type="entry name" value="LepA"/>
    <property type="match status" value="1"/>
</dbReference>
<dbReference type="InterPro" id="IPR006297">
    <property type="entry name" value="EF-4"/>
</dbReference>
<dbReference type="InterPro" id="IPR035647">
    <property type="entry name" value="EFG_III/V"/>
</dbReference>
<dbReference type="InterPro" id="IPR000640">
    <property type="entry name" value="EFG_V-like"/>
</dbReference>
<dbReference type="InterPro" id="IPR004161">
    <property type="entry name" value="EFTu-like_2"/>
</dbReference>
<dbReference type="InterPro" id="IPR031157">
    <property type="entry name" value="G_TR_CS"/>
</dbReference>
<dbReference type="InterPro" id="IPR038363">
    <property type="entry name" value="LepA_C_sf"/>
</dbReference>
<dbReference type="InterPro" id="IPR013842">
    <property type="entry name" value="LepA_CTD"/>
</dbReference>
<dbReference type="InterPro" id="IPR035654">
    <property type="entry name" value="LepA_IV"/>
</dbReference>
<dbReference type="InterPro" id="IPR027417">
    <property type="entry name" value="P-loop_NTPase"/>
</dbReference>
<dbReference type="InterPro" id="IPR005225">
    <property type="entry name" value="Small_GTP-bd"/>
</dbReference>
<dbReference type="InterPro" id="IPR000795">
    <property type="entry name" value="T_Tr_GTP-bd_dom"/>
</dbReference>
<dbReference type="NCBIfam" id="TIGR01393">
    <property type="entry name" value="lepA"/>
    <property type="match status" value="1"/>
</dbReference>
<dbReference type="NCBIfam" id="TIGR00231">
    <property type="entry name" value="small_GTP"/>
    <property type="match status" value="1"/>
</dbReference>
<dbReference type="PANTHER" id="PTHR43512:SF7">
    <property type="entry name" value="TRANSLATION FACTOR GUF1, MITOCHONDRIAL"/>
    <property type="match status" value="1"/>
</dbReference>
<dbReference type="PANTHER" id="PTHR43512">
    <property type="entry name" value="TRANSLATION FACTOR GUF1-RELATED"/>
    <property type="match status" value="1"/>
</dbReference>
<dbReference type="Pfam" id="PF00679">
    <property type="entry name" value="EFG_C"/>
    <property type="match status" value="1"/>
</dbReference>
<dbReference type="Pfam" id="PF00009">
    <property type="entry name" value="GTP_EFTU"/>
    <property type="match status" value="1"/>
</dbReference>
<dbReference type="Pfam" id="PF03144">
    <property type="entry name" value="GTP_EFTU_D2"/>
    <property type="match status" value="1"/>
</dbReference>
<dbReference type="Pfam" id="PF06421">
    <property type="entry name" value="LepA_C"/>
    <property type="match status" value="1"/>
</dbReference>
<dbReference type="PRINTS" id="PR00315">
    <property type="entry name" value="ELONGATNFCT"/>
</dbReference>
<dbReference type="SUPFAM" id="SSF54980">
    <property type="entry name" value="EF-G C-terminal domain-like"/>
    <property type="match status" value="2"/>
</dbReference>
<dbReference type="SUPFAM" id="SSF52540">
    <property type="entry name" value="P-loop containing nucleoside triphosphate hydrolases"/>
    <property type="match status" value="1"/>
</dbReference>
<dbReference type="PROSITE" id="PS00301">
    <property type="entry name" value="G_TR_1"/>
    <property type="match status" value="1"/>
</dbReference>
<dbReference type="PROSITE" id="PS51722">
    <property type="entry name" value="G_TR_2"/>
    <property type="match status" value="1"/>
</dbReference>
<organism>
    <name type="scientific">Saccharomyces cerevisiae (strain YJM789)</name>
    <name type="common">Baker's yeast</name>
    <dbReference type="NCBI Taxonomy" id="307796"/>
    <lineage>
        <taxon>Eukaryota</taxon>
        <taxon>Fungi</taxon>
        <taxon>Dikarya</taxon>
        <taxon>Ascomycota</taxon>
        <taxon>Saccharomycotina</taxon>
        <taxon>Saccharomycetes</taxon>
        <taxon>Saccharomycetales</taxon>
        <taxon>Saccharomycetaceae</taxon>
        <taxon>Saccharomyces</taxon>
    </lineage>
</organism>
<feature type="chain" id="PRO_0000402903" description="Translation factor GUF1, mitochondrial">
    <location>
        <begin position="1"/>
        <end position="645"/>
    </location>
</feature>
<feature type="domain" description="tr-type G">
    <location>
        <begin position="44"/>
        <end position="228"/>
    </location>
</feature>
<feature type="binding site" evidence="1">
    <location>
        <begin position="53"/>
        <end position="60"/>
    </location>
    <ligand>
        <name>GTP</name>
        <dbReference type="ChEBI" id="CHEBI:37565"/>
    </ligand>
</feature>
<feature type="binding site" evidence="1">
    <location>
        <begin position="120"/>
        <end position="124"/>
    </location>
    <ligand>
        <name>GTP</name>
        <dbReference type="ChEBI" id="CHEBI:37565"/>
    </ligand>
</feature>
<feature type="binding site" evidence="1">
    <location>
        <begin position="174"/>
        <end position="177"/>
    </location>
    <ligand>
        <name>GTP</name>
        <dbReference type="ChEBI" id="CHEBI:37565"/>
    </ligand>
</feature>